<evidence type="ECO:0000255" key="1">
    <source>
        <dbReference type="PROSITE-ProRule" id="PRU00227"/>
    </source>
</evidence>
<evidence type="ECO:0000256" key="2">
    <source>
        <dbReference type="SAM" id="MobiDB-lite"/>
    </source>
</evidence>
<evidence type="ECO:0000269" key="3">
    <source>
    </source>
</evidence>
<evidence type="ECO:0000303" key="4">
    <source>
    </source>
</evidence>
<name>RGLT_ASPFC</name>
<gene>
    <name evidence="4" type="primary">rglT</name>
    <name type="ORF">AFUB_008610</name>
</gene>
<accession>B0XQ41</accession>
<sequence>MQFDSLPLPPSSSHDTTSVPPLKRHAACDECRKRKLKCSGEATGCSRCLKQSLPCHYSLQKPMGRPPKKRPREDNDASVYEITDNGMWADIDDGGILTEEAGAEATAASDALRLCPPVYTAPMRMPQAFPNLLSTDDSHNHLWQLESGRSLDPIPATTGPWPDFSSVTAATSSPFTLPSSLTLIDSPSVSSPSSDGGNSSQCTCLSYLYLCLSHLSSLAPFPISQHTLCSLFIAAKTARAVIRCEVCPTSFALGMQNVMFTGTLLNVIADAWLRVSQADAEELGKLAAPPAYVASVTQNSPNPAEAWKDWLRQTVRSAITGGPADPAGQVKCSDSPTLLSLIEEMEARQHRWHRTRTVESPNEPGSCSPVSHEDHREEDMLCFRVIRSARDVIAKFEFAPHEYPEGVVPV</sequence>
<protein>
    <recommendedName>
        <fullName evidence="4">Transcription factor rglT</fullName>
    </recommendedName>
    <alternativeName>
        <fullName evidence="4">Regulator of gliotoxin</fullName>
    </alternativeName>
</protein>
<feature type="chain" id="PRO_0000454487" description="Transcription factor rglT">
    <location>
        <begin position="1"/>
        <end position="410"/>
    </location>
</feature>
<feature type="DNA-binding region" description="Zn(2)-C6 fungal-type" evidence="1">
    <location>
        <begin position="28"/>
        <end position="55"/>
    </location>
</feature>
<feature type="region of interest" description="Disordered" evidence="2">
    <location>
        <begin position="1"/>
        <end position="24"/>
    </location>
</feature>
<feature type="region of interest" description="Disordered" evidence="2">
    <location>
        <begin position="353"/>
        <end position="372"/>
    </location>
</feature>
<feature type="compositionally biased region" description="Polar residues" evidence="2">
    <location>
        <begin position="358"/>
        <end position="369"/>
    </location>
</feature>
<comment type="function">
    <text evidence="3">Transcription factor that is involved in protection against oxidative stress (PubMed:32667960). Binds to promoter regions of the gliotoxin (GT) biosynthetic genes gliZ, gliF, gliT, gliM, gliA and gtmA (PubMed:32667960). Two related but different DNA motifs (5'-TCGG-3' and 5'-CGGNCGG-3') are specifically enriched among rglT binding sites in GT-inducing conditions (PubMed:32667960). Also indirectly regulates the expression of gliP, gliG, gliH and gliN (PubMed:32667960). Plays a key role in resistance against exogenously-added GT and GT biosynthesis, mainly through the direct regulation of gliT (PubMed:32667960). Furthermore, rglT is important for virulence in chemotherapeutic mice with invasive pulmonary aspergillosis (IPA) (PubMed:32667960).</text>
</comment>
<comment type="subcellular location">
    <subcellularLocation>
        <location evidence="1 3">Nucleus</location>
    </subcellularLocation>
</comment>
<comment type="disruption phenotype">
    <text evidence="3">Leads to high sensitivity to allyl alcohol, a compound indicative for potential defects in carbon catabolite repression (CCR), but does not affect growth in non-stress conditions, nor in the presence of 2-deoxyglucose (2DG), an additional indicator for defects in CCR (PubMed:32667960). Also leads to sensitivity to acrolein, menadione and t-butyl hydroperoxide (PubMed:32667960). Abolishes the production of gliotoxin (GT) and accumulates bisdethiobis(methylthio)-gliotoxin (BmGT) (PubMed:32667960). Leads to reduced expression of gliZ, gliT, gliF and gtmA in GT-inducing conditions (PubMed:32667960). Loses all ability to protect itself against exogenously added GT as well and reduces virulence (PubMed:32667960).</text>
</comment>
<keyword id="KW-0238">DNA-binding</keyword>
<keyword id="KW-0539">Nucleus</keyword>
<keyword id="KW-0804">Transcription</keyword>
<keyword id="KW-0805">Transcription regulation</keyword>
<keyword id="KW-0843">Virulence</keyword>
<keyword id="KW-0862">Zinc</keyword>
<organism>
    <name type="scientific">Aspergillus fumigatus (strain CBS 144.89 / FGSC A1163 / CEA10)</name>
    <name type="common">Neosartorya fumigata</name>
    <dbReference type="NCBI Taxonomy" id="451804"/>
    <lineage>
        <taxon>Eukaryota</taxon>
        <taxon>Fungi</taxon>
        <taxon>Dikarya</taxon>
        <taxon>Ascomycota</taxon>
        <taxon>Pezizomycotina</taxon>
        <taxon>Eurotiomycetes</taxon>
        <taxon>Eurotiomycetidae</taxon>
        <taxon>Eurotiales</taxon>
        <taxon>Aspergillaceae</taxon>
        <taxon>Aspergillus</taxon>
        <taxon>Aspergillus subgen. Fumigati</taxon>
    </lineage>
</organism>
<proteinExistence type="inferred from homology"/>
<dbReference type="EMBL" id="DS499594">
    <property type="protein sequence ID" value="EDP56155.1"/>
    <property type="molecule type" value="Genomic_DNA"/>
</dbReference>
<dbReference type="SMR" id="B0XQ41"/>
<dbReference type="EnsemblFungi" id="EDP56155">
    <property type="protein sequence ID" value="EDP56155"/>
    <property type="gene ID" value="AFUB_008610"/>
</dbReference>
<dbReference type="VEuPathDB" id="FungiDB:AFUB_008610"/>
<dbReference type="HOGENOM" id="CLU_026660_1_0_1"/>
<dbReference type="OrthoDB" id="125332at5052"/>
<dbReference type="Proteomes" id="UP000001699">
    <property type="component" value="Unassembled WGS sequence"/>
</dbReference>
<dbReference type="GO" id="GO:0005634">
    <property type="term" value="C:nucleus"/>
    <property type="evidence" value="ECO:0007669"/>
    <property type="project" value="UniProtKB-SubCell"/>
</dbReference>
<dbReference type="GO" id="GO:0000981">
    <property type="term" value="F:DNA-binding transcription factor activity, RNA polymerase II-specific"/>
    <property type="evidence" value="ECO:0007669"/>
    <property type="project" value="InterPro"/>
</dbReference>
<dbReference type="GO" id="GO:0043565">
    <property type="term" value="F:sequence-specific DNA binding"/>
    <property type="evidence" value="ECO:0007669"/>
    <property type="project" value="TreeGrafter"/>
</dbReference>
<dbReference type="GO" id="GO:0008270">
    <property type="term" value="F:zinc ion binding"/>
    <property type="evidence" value="ECO:0007669"/>
    <property type="project" value="InterPro"/>
</dbReference>
<dbReference type="GO" id="GO:0045944">
    <property type="term" value="P:positive regulation of transcription by RNA polymerase II"/>
    <property type="evidence" value="ECO:0007669"/>
    <property type="project" value="TreeGrafter"/>
</dbReference>
<dbReference type="CDD" id="cd00067">
    <property type="entry name" value="GAL4"/>
    <property type="match status" value="1"/>
</dbReference>
<dbReference type="Gene3D" id="4.10.240.10">
    <property type="entry name" value="Zn(2)-C6 fungal-type DNA-binding domain"/>
    <property type="match status" value="1"/>
</dbReference>
<dbReference type="InterPro" id="IPR051711">
    <property type="entry name" value="Stress_Response_Reg"/>
</dbReference>
<dbReference type="InterPro" id="IPR036864">
    <property type="entry name" value="Zn2-C6_fun-type_DNA-bd_sf"/>
</dbReference>
<dbReference type="InterPro" id="IPR001138">
    <property type="entry name" value="Zn2Cys6_DnaBD"/>
</dbReference>
<dbReference type="PANTHER" id="PTHR47540">
    <property type="entry name" value="THIAMINE REPRESSIBLE GENES REGULATORY PROTEIN THI5"/>
    <property type="match status" value="1"/>
</dbReference>
<dbReference type="PANTHER" id="PTHR47540:SF4">
    <property type="entry name" value="TRANSCRIPTION FACTOR RGLT"/>
    <property type="match status" value="1"/>
</dbReference>
<dbReference type="Pfam" id="PF00172">
    <property type="entry name" value="Zn_clus"/>
    <property type="match status" value="1"/>
</dbReference>
<dbReference type="SMART" id="SM00066">
    <property type="entry name" value="GAL4"/>
    <property type="match status" value="1"/>
</dbReference>
<dbReference type="SUPFAM" id="SSF57701">
    <property type="entry name" value="Zn2/Cys6 DNA-binding domain"/>
    <property type="match status" value="1"/>
</dbReference>
<dbReference type="PROSITE" id="PS00463">
    <property type="entry name" value="ZN2_CY6_FUNGAL_1"/>
    <property type="match status" value="1"/>
</dbReference>
<dbReference type="PROSITE" id="PS50048">
    <property type="entry name" value="ZN2_CY6_FUNGAL_2"/>
    <property type="match status" value="1"/>
</dbReference>
<reference key="1">
    <citation type="journal article" date="2008" name="PLoS Genet.">
        <title>Genomic islands in the pathogenic filamentous fungus Aspergillus fumigatus.</title>
        <authorList>
            <person name="Fedorova N.D."/>
            <person name="Khaldi N."/>
            <person name="Joardar V.S."/>
            <person name="Maiti R."/>
            <person name="Amedeo P."/>
            <person name="Anderson M.J."/>
            <person name="Crabtree J."/>
            <person name="Silva J.C."/>
            <person name="Badger J.H."/>
            <person name="Albarraq A."/>
            <person name="Angiuoli S."/>
            <person name="Bussey H."/>
            <person name="Bowyer P."/>
            <person name="Cotty P.J."/>
            <person name="Dyer P.S."/>
            <person name="Egan A."/>
            <person name="Galens K."/>
            <person name="Fraser-Liggett C.M."/>
            <person name="Haas B.J."/>
            <person name="Inman J.M."/>
            <person name="Kent R."/>
            <person name="Lemieux S."/>
            <person name="Malavazi I."/>
            <person name="Orvis J."/>
            <person name="Roemer T."/>
            <person name="Ronning C.M."/>
            <person name="Sundaram J.P."/>
            <person name="Sutton G."/>
            <person name="Turner G."/>
            <person name="Venter J.C."/>
            <person name="White O.R."/>
            <person name="Whitty B.R."/>
            <person name="Youngman P."/>
            <person name="Wolfe K.H."/>
            <person name="Goldman G.H."/>
            <person name="Wortman J.R."/>
            <person name="Jiang B."/>
            <person name="Denning D.W."/>
            <person name="Nierman W.C."/>
        </authorList>
    </citation>
    <scope>NUCLEOTIDE SEQUENCE [LARGE SCALE GENOMIC DNA]</scope>
    <source>
        <strain>CBS 144.89 / FGSC A1163 / CEA10</strain>
    </source>
</reference>
<reference key="2">
    <citation type="journal article" date="2020" name="PLoS Pathog.">
        <title>The Aspergillus fumigatus transcription factor RglT is important for gliotoxin biosynthesis and self-protection, and virulence.</title>
        <authorList>
            <person name="Ries L.N.A."/>
            <person name="Pardeshi L."/>
            <person name="Dong Z."/>
            <person name="Tan K."/>
            <person name="Steenwyk J.L."/>
            <person name="Colabardini A.C."/>
            <person name="Ferreira Filho J.A."/>
            <person name="de Castro P.A."/>
            <person name="Silva L.P."/>
            <person name="Preite N.W."/>
            <person name="Almeida F."/>
            <person name="de Assis L.J."/>
            <person name="Dos Santos R.A.C."/>
            <person name="Bowyer P."/>
            <person name="Bromley M."/>
            <person name="Owens R.A."/>
            <person name="Doyle S."/>
            <person name="Demasi M."/>
            <person name="Hernandez D.C.R."/>
            <person name="Netto L.E.S."/>
            <person name="Pupo M.T."/>
            <person name="Rokas A."/>
            <person name="Loures F.V."/>
            <person name="Wong K.H."/>
            <person name="Goldman G.H."/>
        </authorList>
    </citation>
    <scope>FUNCTION</scope>
    <scope>DISRUPTION PHENOTYPE</scope>
    <scope>SUBCELLULAR LOCATION</scope>
</reference>